<name>CYSM_PSEAE</name>
<keyword id="KW-0028">Amino-acid biosynthesis</keyword>
<keyword id="KW-0198">Cysteine biosynthesis</keyword>
<keyword id="KW-0663">Pyridoxal phosphate</keyword>
<keyword id="KW-1185">Reference proteome</keyword>
<keyword id="KW-0808">Transferase</keyword>
<protein>
    <recommendedName>
        <fullName>Cysteine synthase B</fullName>
        <shortName>CSase B</shortName>
        <ecNumber>2.5.1.47</ecNumber>
    </recommendedName>
    <alternativeName>
        <fullName>O-acetylserine (thiol)-lyase B</fullName>
        <shortName>OAS-TL B</shortName>
    </alternativeName>
    <alternativeName>
        <fullName>O-acetylserine sulfhydrylase B</fullName>
    </alternativeName>
</protein>
<feature type="chain" id="PRO_0000287759" description="Cysteine synthase B">
    <location>
        <begin position="1"/>
        <end position="299"/>
    </location>
</feature>
<feature type="binding site" evidence="1">
    <location>
        <position position="75"/>
    </location>
    <ligand>
        <name>pyridoxal 5'-phosphate</name>
        <dbReference type="ChEBI" id="CHEBI:597326"/>
    </ligand>
</feature>
<feature type="binding site" evidence="1">
    <location>
        <begin position="178"/>
        <end position="182"/>
    </location>
    <ligand>
        <name>pyridoxal 5'-phosphate</name>
        <dbReference type="ChEBI" id="CHEBI:597326"/>
    </ligand>
</feature>
<feature type="binding site" evidence="1">
    <location>
        <position position="259"/>
    </location>
    <ligand>
        <name>pyridoxal 5'-phosphate</name>
        <dbReference type="ChEBI" id="CHEBI:597326"/>
    </ligand>
</feature>
<feature type="modified residue" description="N6-(pyridoxal phosphate)lysine" evidence="1">
    <location>
        <position position="45"/>
    </location>
</feature>
<gene>
    <name type="primary">cysM</name>
    <name type="ordered locus">PA0932</name>
</gene>
<organism>
    <name type="scientific">Pseudomonas aeruginosa (strain ATCC 15692 / DSM 22644 / CIP 104116 / JCM 14847 / LMG 12228 / 1C / PRS 101 / PAO1)</name>
    <dbReference type="NCBI Taxonomy" id="208964"/>
    <lineage>
        <taxon>Bacteria</taxon>
        <taxon>Pseudomonadati</taxon>
        <taxon>Pseudomonadota</taxon>
        <taxon>Gammaproteobacteria</taxon>
        <taxon>Pseudomonadales</taxon>
        <taxon>Pseudomonadaceae</taxon>
        <taxon>Pseudomonas</taxon>
    </lineage>
</organism>
<reference key="1">
    <citation type="journal article" date="2000" name="Nature">
        <title>Complete genome sequence of Pseudomonas aeruginosa PAO1, an opportunistic pathogen.</title>
        <authorList>
            <person name="Stover C.K."/>
            <person name="Pham X.-Q.T."/>
            <person name="Erwin A.L."/>
            <person name="Mizoguchi S.D."/>
            <person name="Warrener P."/>
            <person name="Hickey M.J."/>
            <person name="Brinkman F.S.L."/>
            <person name="Hufnagle W.O."/>
            <person name="Kowalik D.J."/>
            <person name="Lagrou M."/>
            <person name="Garber R.L."/>
            <person name="Goltry L."/>
            <person name="Tolentino E."/>
            <person name="Westbrock-Wadman S."/>
            <person name="Yuan Y."/>
            <person name="Brody L.L."/>
            <person name="Coulter S.N."/>
            <person name="Folger K.R."/>
            <person name="Kas A."/>
            <person name="Larbig K."/>
            <person name="Lim R.M."/>
            <person name="Smith K.A."/>
            <person name="Spencer D.H."/>
            <person name="Wong G.K.-S."/>
            <person name="Wu Z."/>
            <person name="Paulsen I.T."/>
            <person name="Reizer J."/>
            <person name="Saier M.H. Jr."/>
            <person name="Hancock R.E.W."/>
            <person name="Lory S."/>
            <person name="Olson M.V."/>
        </authorList>
    </citation>
    <scope>NUCLEOTIDE SEQUENCE [LARGE SCALE GENOMIC DNA]</scope>
    <source>
        <strain>ATCC 15692 / DSM 22644 / CIP 104116 / JCM 14847 / LMG 12228 / 1C / PRS 101 / PAO1</strain>
    </source>
</reference>
<sequence length="299" mass="32448">MTVQYPTIADCVGNTPLVRLQRLPGETSNTLLVKLEGNNPAGSVKDRPALSMITRAELRGDIRPGDTLIEATSGNTGIALAMAAAIKGYKMILIMPDNSTAERKAAMTAYGAELILVSKEEGMEGARDLADKLQREGRGKVLDQFANGDNPEAHYHSTGPEIWQQTGGSITHFVSSMGTTGTIMGVSRYLKEQNPAVQIVGLQPMEGSAIPGIRRWPQEYLPKIYDASRVDRVVDMHQDEAEDIMRRLAREEGIFCGVSSGGAVAAMLRLSRELENAVLVAIICDRGDRYLSSGVYDPR</sequence>
<evidence type="ECO:0000250" key="1"/>
<evidence type="ECO:0000305" key="2"/>
<dbReference type="EC" id="2.5.1.47"/>
<dbReference type="EMBL" id="AE004091">
    <property type="protein sequence ID" value="AAG04321.1"/>
    <property type="molecule type" value="Genomic_DNA"/>
</dbReference>
<dbReference type="PIR" id="A83530">
    <property type="entry name" value="A83530"/>
</dbReference>
<dbReference type="RefSeq" id="NP_249623.1">
    <property type="nucleotide sequence ID" value="NC_002516.2"/>
</dbReference>
<dbReference type="RefSeq" id="WP_003102419.1">
    <property type="nucleotide sequence ID" value="NZ_QZGE01000007.1"/>
</dbReference>
<dbReference type="SMR" id="Q9I526"/>
<dbReference type="FunCoup" id="Q9I526">
    <property type="interactions" value="367"/>
</dbReference>
<dbReference type="STRING" id="208964.PA0932"/>
<dbReference type="PaxDb" id="208964-PA0932"/>
<dbReference type="GeneID" id="881832"/>
<dbReference type="KEGG" id="pae:PA0932"/>
<dbReference type="PATRIC" id="fig|208964.12.peg.967"/>
<dbReference type="PseudoCAP" id="PA0932"/>
<dbReference type="HOGENOM" id="CLU_021018_1_0_6"/>
<dbReference type="InParanoid" id="Q9I526"/>
<dbReference type="OrthoDB" id="9805733at2"/>
<dbReference type="PhylomeDB" id="Q9I526"/>
<dbReference type="BioCyc" id="PAER208964:G1FZ6-952-MONOMER"/>
<dbReference type="UniPathway" id="UPA00136">
    <property type="reaction ID" value="UER00200"/>
</dbReference>
<dbReference type="Proteomes" id="UP000002438">
    <property type="component" value="Chromosome"/>
</dbReference>
<dbReference type="GO" id="GO:0005737">
    <property type="term" value="C:cytoplasm"/>
    <property type="evidence" value="ECO:0000318"/>
    <property type="project" value="GO_Central"/>
</dbReference>
<dbReference type="GO" id="GO:0004124">
    <property type="term" value="F:cysteine synthase activity"/>
    <property type="evidence" value="ECO:0000318"/>
    <property type="project" value="GO_Central"/>
</dbReference>
<dbReference type="GO" id="GO:0019344">
    <property type="term" value="P:cysteine biosynthetic process"/>
    <property type="evidence" value="ECO:0000318"/>
    <property type="project" value="GO_Central"/>
</dbReference>
<dbReference type="GO" id="GO:0006535">
    <property type="term" value="P:cysteine biosynthetic process from serine"/>
    <property type="evidence" value="ECO:0007669"/>
    <property type="project" value="InterPro"/>
</dbReference>
<dbReference type="CDD" id="cd01561">
    <property type="entry name" value="CBS_like"/>
    <property type="match status" value="1"/>
</dbReference>
<dbReference type="FunFam" id="3.40.50.1100:FF:000003">
    <property type="entry name" value="Cystathionine beta-synthase"/>
    <property type="match status" value="1"/>
</dbReference>
<dbReference type="FunFam" id="3.40.50.1100:FF:000029">
    <property type="entry name" value="Cysteine synthase"/>
    <property type="match status" value="1"/>
</dbReference>
<dbReference type="Gene3D" id="3.40.50.1100">
    <property type="match status" value="2"/>
</dbReference>
<dbReference type="InterPro" id="IPR005856">
    <property type="entry name" value="Cys_synth"/>
</dbReference>
<dbReference type="InterPro" id="IPR050214">
    <property type="entry name" value="Cys_Synth/Cystath_Beta-Synth"/>
</dbReference>
<dbReference type="InterPro" id="IPR005858">
    <property type="entry name" value="CysM"/>
</dbReference>
<dbReference type="InterPro" id="IPR001216">
    <property type="entry name" value="P-phosphate_BS"/>
</dbReference>
<dbReference type="InterPro" id="IPR001926">
    <property type="entry name" value="TrpB-like_PALP"/>
</dbReference>
<dbReference type="InterPro" id="IPR036052">
    <property type="entry name" value="TrpB-like_PALP_sf"/>
</dbReference>
<dbReference type="NCBIfam" id="TIGR01136">
    <property type="entry name" value="cysKM"/>
    <property type="match status" value="1"/>
</dbReference>
<dbReference type="NCBIfam" id="TIGR01138">
    <property type="entry name" value="cysM"/>
    <property type="match status" value="1"/>
</dbReference>
<dbReference type="NCBIfam" id="NF008735">
    <property type="entry name" value="PRK11761.1"/>
    <property type="match status" value="1"/>
</dbReference>
<dbReference type="PANTHER" id="PTHR10314">
    <property type="entry name" value="CYSTATHIONINE BETA-SYNTHASE"/>
    <property type="match status" value="1"/>
</dbReference>
<dbReference type="Pfam" id="PF00291">
    <property type="entry name" value="PALP"/>
    <property type="match status" value="1"/>
</dbReference>
<dbReference type="SUPFAM" id="SSF53686">
    <property type="entry name" value="Tryptophan synthase beta subunit-like PLP-dependent enzymes"/>
    <property type="match status" value="1"/>
</dbReference>
<dbReference type="PROSITE" id="PS00901">
    <property type="entry name" value="CYS_SYNTHASE"/>
    <property type="match status" value="1"/>
</dbReference>
<comment type="catalytic activity">
    <reaction>
        <text>O-acetyl-L-serine + hydrogen sulfide = L-cysteine + acetate</text>
        <dbReference type="Rhea" id="RHEA:14829"/>
        <dbReference type="ChEBI" id="CHEBI:29919"/>
        <dbReference type="ChEBI" id="CHEBI:30089"/>
        <dbReference type="ChEBI" id="CHEBI:35235"/>
        <dbReference type="ChEBI" id="CHEBI:58340"/>
        <dbReference type="EC" id="2.5.1.47"/>
    </reaction>
</comment>
<comment type="cofactor">
    <cofactor evidence="1">
        <name>pyridoxal 5'-phosphate</name>
        <dbReference type="ChEBI" id="CHEBI:597326"/>
    </cofactor>
</comment>
<comment type="pathway">
    <text>Amino-acid biosynthesis; L-cysteine biosynthesis; L-cysteine from L-serine: step 2/2.</text>
</comment>
<comment type="similarity">
    <text evidence="2">Belongs to the cysteine synthase/cystathionine beta-synthase family.</text>
</comment>
<proteinExistence type="inferred from homology"/>
<accession>Q9I526</accession>